<proteinExistence type="inferred from homology"/>
<dbReference type="EC" id="5.3.1.12" evidence="1"/>
<dbReference type="EMBL" id="CP001113">
    <property type="protein sequence ID" value="ACF65171.1"/>
    <property type="molecule type" value="Genomic_DNA"/>
</dbReference>
<dbReference type="RefSeq" id="WP_000190180.1">
    <property type="nucleotide sequence ID" value="NZ_CCMR01000001.1"/>
</dbReference>
<dbReference type="SMR" id="B4T5P8"/>
<dbReference type="KEGG" id="see:SNSL254_A3389"/>
<dbReference type="HOGENOM" id="CLU_044465_1_0_6"/>
<dbReference type="UniPathway" id="UPA00246"/>
<dbReference type="Proteomes" id="UP000008824">
    <property type="component" value="Chromosome"/>
</dbReference>
<dbReference type="GO" id="GO:0008880">
    <property type="term" value="F:glucuronate isomerase activity"/>
    <property type="evidence" value="ECO:0007669"/>
    <property type="project" value="UniProtKB-UniRule"/>
</dbReference>
<dbReference type="GO" id="GO:0019698">
    <property type="term" value="P:D-galacturonate catabolic process"/>
    <property type="evidence" value="ECO:0007669"/>
    <property type="project" value="TreeGrafter"/>
</dbReference>
<dbReference type="GO" id="GO:0042840">
    <property type="term" value="P:D-glucuronate catabolic process"/>
    <property type="evidence" value="ECO:0007669"/>
    <property type="project" value="TreeGrafter"/>
</dbReference>
<dbReference type="Gene3D" id="3.20.20.140">
    <property type="entry name" value="Metal-dependent hydrolases"/>
    <property type="match status" value="1"/>
</dbReference>
<dbReference type="Gene3D" id="1.10.2020.10">
    <property type="entry name" value="uronate isomerase, domain 2, chain A"/>
    <property type="match status" value="1"/>
</dbReference>
<dbReference type="HAMAP" id="MF_00675">
    <property type="entry name" value="UxaC"/>
    <property type="match status" value="1"/>
</dbReference>
<dbReference type="InterPro" id="IPR032466">
    <property type="entry name" value="Metal_Hydrolase"/>
</dbReference>
<dbReference type="InterPro" id="IPR003766">
    <property type="entry name" value="Uronate_isomerase"/>
</dbReference>
<dbReference type="NCBIfam" id="NF002794">
    <property type="entry name" value="PRK02925.1"/>
    <property type="match status" value="1"/>
</dbReference>
<dbReference type="PANTHER" id="PTHR30068">
    <property type="entry name" value="URONATE ISOMERASE"/>
    <property type="match status" value="1"/>
</dbReference>
<dbReference type="PANTHER" id="PTHR30068:SF4">
    <property type="entry name" value="URONATE ISOMERASE"/>
    <property type="match status" value="1"/>
</dbReference>
<dbReference type="Pfam" id="PF02614">
    <property type="entry name" value="UxaC"/>
    <property type="match status" value="1"/>
</dbReference>
<dbReference type="SUPFAM" id="SSF51556">
    <property type="entry name" value="Metallo-dependent hydrolases"/>
    <property type="match status" value="1"/>
</dbReference>
<keyword id="KW-0413">Isomerase</keyword>
<comment type="catalytic activity">
    <reaction evidence="1">
        <text>D-glucuronate = D-fructuronate</text>
        <dbReference type="Rhea" id="RHEA:13049"/>
        <dbReference type="ChEBI" id="CHEBI:58720"/>
        <dbReference type="ChEBI" id="CHEBI:59863"/>
        <dbReference type="EC" id="5.3.1.12"/>
    </reaction>
</comment>
<comment type="catalytic activity">
    <reaction evidence="1">
        <text>aldehydo-D-galacturonate = keto-D-tagaturonate</text>
        <dbReference type="Rhea" id="RHEA:27702"/>
        <dbReference type="ChEBI" id="CHEBI:12952"/>
        <dbReference type="ChEBI" id="CHEBI:17886"/>
        <dbReference type="EC" id="5.3.1.12"/>
    </reaction>
</comment>
<comment type="pathway">
    <text evidence="1">Carbohydrate metabolism; pentose and glucuronate interconversion.</text>
</comment>
<comment type="similarity">
    <text evidence="1">Belongs to the metallo-dependent hydrolases superfamily. Uronate isomerase family.</text>
</comment>
<name>UXAC_SALNS</name>
<feature type="chain" id="PRO_1000131605" description="Uronate isomerase">
    <location>
        <begin position="1"/>
        <end position="470"/>
    </location>
</feature>
<organism>
    <name type="scientific">Salmonella newport (strain SL254)</name>
    <dbReference type="NCBI Taxonomy" id="423368"/>
    <lineage>
        <taxon>Bacteria</taxon>
        <taxon>Pseudomonadati</taxon>
        <taxon>Pseudomonadota</taxon>
        <taxon>Gammaproteobacteria</taxon>
        <taxon>Enterobacterales</taxon>
        <taxon>Enterobacteriaceae</taxon>
        <taxon>Salmonella</taxon>
    </lineage>
</organism>
<gene>
    <name evidence="1" type="primary">uxaC</name>
    <name type="ordered locus">SNSL254_A3389</name>
</gene>
<evidence type="ECO:0000255" key="1">
    <source>
        <dbReference type="HAMAP-Rule" id="MF_00675"/>
    </source>
</evidence>
<protein>
    <recommendedName>
        <fullName evidence="1">Uronate isomerase</fullName>
        <ecNumber evidence="1">5.3.1.12</ecNumber>
    </recommendedName>
    <alternativeName>
        <fullName evidence="1">Glucuronate isomerase</fullName>
    </alternativeName>
    <alternativeName>
        <fullName evidence="1">Uronic isomerase</fullName>
    </alternativeName>
</protein>
<accession>B4T5P8</accession>
<reference key="1">
    <citation type="journal article" date="2011" name="J. Bacteriol.">
        <title>Comparative genomics of 28 Salmonella enterica isolates: evidence for CRISPR-mediated adaptive sublineage evolution.</title>
        <authorList>
            <person name="Fricke W.F."/>
            <person name="Mammel M.K."/>
            <person name="McDermott P.F."/>
            <person name="Tartera C."/>
            <person name="White D.G."/>
            <person name="Leclerc J.E."/>
            <person name="Ravel J."/>
            <person name="Cebula T.A."/>
        </authorList>
    </citation>
    <scope>NUCLEOTIDE SEQUENCE [LARGE SCALE GENOMIC DNA]</scope>
    <source>
        <strain>SL254</strain>
    </source>
</reference>
<sequence>MATFMTEDFLLKNDIARTLYHKYAAPMPIYDFHCHLSPQEIADDRRFDNLGQIWLEGDHYKWRALRSAGVDESLITGKETSDYEKYMAWANTVPKTLGNPLYHWTHLELRRPFGITGTLFGPDTAESIWTQCNEKLATPAFSARGIMQQMNVRMVGTTDDPIDSLEYHRQIAADDSIDIEVAPSWRPDKVFKIELDGFVDYLGKLEAAADVSITRFDDLRQALTRRLDHFAACGCRASDHGIETLRFAPVPDDAQLDAILGKRLAGETLSELEIAQFTTAVLVWLGRQYAARGWVMQLHIGAIRNNNTRMFRLLGPDTGFDSIGDNNISWALSRLLDSMDVTNELPKTILYCLNPRDNEVLATMIGNFQGPGIAGKVQFGSGWWFNDQKDGMLRQLEQLSQMGLLSQFVGMLTDSRSFLSYTRHEYFRRILCNLLGQWAQDGEIPDDEAMLSRMVQDICFNNAQRYFTIK</sequence>